<name>RS141_MAIZE</name>
<keyword id="KW-1185">Reference proteome</keyword>
<keyword id="KW-0687">Ribonucleoprotein</keyword>
<keyword id="KW-0689">Ribosomal protein</keyword>
<evidence type="ECO:0000256" key="1">
    <source>
        <dbReference type="SAM" id="MobiDB-lite"/>
    </source>
</evidence>
<evidence type="ECO:0000305" key="2"/>
<organism>
    <name type="scientific">Zea mays</name>
    <name type="common">Maize</name>
    <dbReference type="NCBI Taxonomy" id="4577"/>
    <lineage>
        <taxon>Eukaryota</taxon>
        <taxon>Viridiplantae</taxon>
        <taxon>Streptophyta</taxon>
        <taxon>Embryophyta</taxon>
        <taxon>Tracheophyta</taxon>
        <taxon>Spermatophyta</taxon>
        <taxon>Magnoliopsida</taxon>
        <taxon>Liliopsida</taxon>
        <taxon>Poales</taxon>
        <taxon>Poaceae</taxon>
        <taxon>PACMAD clade</taxon>
        <taxon>Panicoideae</taxon>
        <taxon>Andropogonodae</taxon>
        <taxon>Andropogoneae</taxon>
        <taxon>Tripsacinae</taxon>
        <taxon>Zea</taxon>
    </lineage>
</organism>
<dbReference type="PIR" id="A30097">
    <property type="entry name" value="A30097"/>
</dbReference>
<dbReference type="SMR" id="P19950"/>
<dbReference type="STRING" id="4577.P19950"/>
<dbReference type="PaxDb" id="4577-GRMZM5G805627_P02"/>
<dbReference type="MaizeGDB" id="69559"/>
<dbReference type="eggNOG" id="KOG0407">
    <property type="taxonomic scope" value="Eukaryota"/>
</dbReference>
<dbReference type="InParanoid" id="P19950"/>
<dbReference type="Proteomes" id="UP000007305">
    <property type="component" value="Unplaced"/>
</dbReference>
<dbReference type="ExpressionAtlas" id="P19950">
    <property type="expression patterns" value="baseline and differential"/>
</dbReference>
<dbReference type="GO" id="GO:0022627">
    <property type="term" value="C:cytosolic small ribosomal subunit"/>
    <property type="evidence" value="ECO:0000318"/>
    <property type="project" value="GO_Central"/>
</dbReference>
<dbReference type="GO" id="GO:0003735">
    <property type="term" value="F:structural constituent of ribosome"/>
    <property type="evidence" value="ECO:0000318"/>
    <property type="project" value="GO_Central"/>
</dbReference>
<dbReference type="GO" id="GO:0000028">
    <property type="term" value="P:ribosomal small subunit assembly"/>
    <property type="evidence" value="ECO:0000318"/>
    <property type="project" value="GO_Central"/>
</dbReference>
<dbReference type="GO" id="GO:0006412">
    <property type="term" value="P:translation"/>
    <property type="evidence" value="ECO:0000318"/>
    <property type="project" value="GO_Central"/>
</dbReference>
<dbReference type="FunFam" id="3.30.420.80:FF:000002">
    <property type="entry name" value="40S ribosomal protein S14"/>
    <property type="match status" value="1"/>
</dbReference>
<dbReference type="Gene3D" id="3.30.420.80">
    <property type="entry name" value="Ribosomal protein S11"/>
    <property type="match status" value="1"/>
</dbReference>
<dbReference type="HAMAP" id="MF_01310">
    <property type="entry name" value="Ribosomal_uS11"/>
    <property type="match status" value="1"/>
</dbReference>
<dbReference type="InterPro" id="IPR001971">
    <property type="entry name" value="Ribosomal_uS11"/>
</dbReference>
<dbReference type="InterPro" id="IPR018102">
    <property type="entry name" value="Ribosomal_uS11_CS"/>
</dbReference>
<dbReference type="InterPro" id="IPR036967">
    <property type="entry name" value="Ribosomal_uS11_sf"/>
</dbReference>
<dbReference type="NCBIfam" id="NF007176">
    <property type="entry name" value="PRK09607.1"/>
    <property type="match status" value="1"/>
</dbReference>
<dbReference type="PANTHER" id="PTHR11759">
    <property type="entry name" value="40S RIBOSOMAL PROTEIN S14/30S RIBOSOMAL PROTEIN S11"/>
    <property type="match status" value="1"/>
</dbReference>
<dbReference type="Pfam" id="PF00411">
    <property type="entry name" value="Ribosomal_S11"/>
    <property type="match status" value="1"/>
</dbReference>
<dbReference type="PIRSF" id="PIRSF002131">
    <property type="entry name" value="Ribosomal_S11"/>
    <property type="match status" value="1"/>
</dbReference>
<dbReference type="SUPFAM" id="SSF53137">
    <property type="entry name" value="Translational machinery components"/>
    <property type="match status" value="1"/>
</dbReference>
<dbReference type="PROSITE" id="PS00054">
    <property type="entry name" value="RIBOSOMAL_S11"/>
    <property type="match status" value="1"/>
</dbReference>
<accession>P19950</accession>
<sequence>MSRRKTREPKEENVLGPTVREGEFVFGVAHIFASFNDTFIHVTDLSGRETLVRITGGMKVKADRDESSPYAAMLAAQDVAQRCKELGITALHIKLRATGGNKTKTPGPGAQSALRALARSGMKIGRIEDVTPVPTDSTRRKGGRRGRRL</sequence>
<protein>
    <recommendedName>
        <fullName evidence="2">Small ribosomal subunit protein uS11z</fullName>
    </recommendedName>
    <alternativeName>
        <fullName evidence="2">40S ribosomal protein S14</fullName>
    </alternativeName>
    <alternativeName>
        <fullName>Clone MCH1</fullName>
    </alternativeName>
</protein>
<feature type="chain" id="PRO_0000123349" description="Small ribosomal subunit protein uS11z">
    <location>
        <begin position="1"/>
        <end position="149"/>
    </location>
</feature>
<feature type="region of interest" description="Disordered" evidence="1">
    <location>
        <begin position="130"/>
        <end position="149"/>
    </location>
</feature>
<feature type="compositionally biased region" description="Basic residues" evidence="1">
    <location>
        <begin position="140"/>
        <end position="149"/>
    </location>
</feature>
<proteinExistence type="inferred from homology"/>
<comment type="similarity">
    <text evidence="2">Belongs to the universal ribosomal protein uS11 family.</text>
</comment>
<reference key="1">
    <citation type="journal article" date="1989" name="Genes Dev.">
        <title>The organization and expression of a maize ribosomal protein gene family.</title>
        <authorList>
            <person name="Larkin J.C."/>
            <person name="Hunsperger J.P."/>
            <person name="Culley D."/>
            <person name="Rubenstein I."/>
            <person name="Silflow C.D."/>
        </authorList>
    </citation>
    <scope>NUCLEOTIDE SEQUENCE</scope>
</reference>